<proteinExistence type="evidence at protein level"/>
<organism>
    <name type="scientific">Oryza sativa subsp. japonica</name>
    <name type="common">Rice</name>
    <dbReference type="NCBI Taxonomy" id="39947"/>
    <lineage>
        <taxon>Eukaryota</taxon>
        <taxon>Viridiplantae</taxon>
        <taxon>Streptophyta</taxon>
        <taxon>Embryophyta</taxon>
        <taxon>Tracheophyta</taxon>
        <taxon>Spermatophyta</taxon>
        <taxon>Magnoliopsida</taxon>
        <taxon>Liliopsida</taxon>
        <taxon>Poales</taxon>
        <taxon>Poaceae</taxon>
        <taxon>BOP clade</taxon>
        <taxon>Oryzoideae</taxon>
        <taxon>Oryzeae</taxon>
        <taxon>Oryzinae</taxon>
        <taxon>Oryza</taxon>
        <taxon>Oryza sativa</taxon>
    </lineage>
</organism>
<gene>
    <name evidence="7" type="primary">ASR5</name>
    <name evidence="12" type="ordered locus">Os11g0167800</name>
    <name evidence="11" type="ordered locus">LOC_Os11g06720</name>
    <name evidence="13" type="ORF">OsJ_33099</name>
</gene>
<evidence type="ECO:0000256" key="1">
    <source>
        <dbReference type="SAM" id="MobiDB-lite"/>
    </source>
</evidence>
<evidence type="ECO:0000269" key="2">
    <source>
    </source>
</evidence>
<evidence type="ECO:0000269" key="3">
    <source>
    </source>
</evidence>
<evidence type="ECO:0000269" key="4">
    <source>
    </source>
</evidence>
<evidence type="ECO:0000269" key="5">
    <source>
    </source>
</evidence>
<evidence type="ECO:0000269" key="6">
    <source>
    </source>
</evidence>
<evidence type="ECO:0000303" key="7">
    <source>
    </source>
</evidence>
<evidence type="ECO:0000303" key="8">
    <source>
    </source>
</evidence>
<evidence type="ECO:0000305" key="9"/>
<evidence type="ECO:0000305" key="10">
    <source>
    </source>
</evidence>
<evidence type="ECO:0000312" key="11">
    <source>
        <dbReference type="EMBL" id="AAX96480.1"/>
    </source>
</evidence>
<evidence type="ECO:0000312" key="12">
    <source>
        <dbReference type="EMBL" id="BAF27686.1"/>
    </source>
</evidence>
<evidence type="ECO:0000312" key="13">
    <source>
        <dbReference type="EMBL" id="EAZ17562.1"/>
    </source>
</evidence>
<sequence length="138" mass="15465">MAEEKHHHHLFHHKKDDEPATGVDSYGEGVYTSETVTTEVVAGGQDEYERYKKEEKQHKHKQHLGEAGALAAGAFALYEKHEAKKDPENAHRHKITEEIAATAAVGAGGYAFHEHHEKKKDHKSAEESTGEKKHHLFG</sequence>
<comment type="function">
    <text evidence="3 5 6 10">May function in gibberellin signaling pathway downstream of GID1 and SLR1. May be involved in the regulation of plant growth in the basal region of leaf sheaths (Probable). Involved in tolerance to aluminum (PubMed:22676236, PubMed:24253199). Regulates the expression of different genes that collectively contribute to the protection of the cell in response to aluminum stress (PubMed:22676236, PubMed:24253199). Binds to the promoter and regulates the expression of target genes involved in aluminum stress response. Binds to the promoter of STAR1 gene, which encodes an ABC transporter required for aluminum tolerance (PubMed:24253199). Involved in drought tolerance. Plays a positive role in response to drought stress response by regulating abscisic acid (ABA) biosynthesis, promoting stomatal closure, and acting as chaperone-like protein that possibly prevents drought stress-related proteins from inactivation (PubMed:27420922).</text>
</comment>
<comment type="subcellular location">
    <subcellularLocation>
        <location evidence="2 3">Nucleus</location>
    </subcellularLocation>
    <subcellularLocation>
        <location evidence="2 3">Cytoplasm</location>
    </subcellularLocation>
</comment>
<comment type="tissue specificity">
    <text evidence="2 4">Expressed in the basal region of leaf sheaths (PubMed:18210155). Highly expressed in stems, and at lower levels in roots, leaf sheaths and panicles (PubMed:24085307).</text>
</comment>
<comment type="induction">
    <text evidence="2 3 4 6">Induced by gibberellin (at protein level) in the nucleus. Induced by abscisic acid (at protein level) (PubMed:18210155). Induced by aluminum in roots and shoots (PubMed:22676236). Induced by abscisic acid (ABA). Induced by drought and cold stresses in leaves (PubMed:24085307). Induced by cold stress, osmotic shock, salt stress, ABA and ethylene (PubMed:27420922).</text>
</comment>
<comment type="disruption phenotype">
    <text evidence="6">No visible phenotype under normal growth conditions, but mutant plants are hypersensitive to drought stress, and have decreased sensitivity to abscisic acid-induced germination inhibition and oxidative stress-induced growth inhibition.</text>
</comment>
<comment type="miscellaneous">
    <text evidence="3 6">Plants silencing ASR5 exhibit delayed flowering, abnormal panicles, reduced seed number, reduced number of trichomes on leaves, palea and lemma, and exhibit sensitivity to aluminum and drought stress (PubMed:22676236). Plants over-expressing ASR5 exhibit enhanced tolerance to salt stress, osmotic shock and drought stress (PubMed:27420922).</text>
</comment>
<comment type="similarity">
    <text evidence="9">Belongs to the abscisic acid and water stress-induced protein family.</text>
</comment>
<reference key="1">
    <citation type="journal article" date="2005" name="BMC Biol.">
        <title>The sequence of rice chromosomes 11 and 12, rich in disease resistance genes and recent gene duplications.</title>
        <authorList>
            <consortium name="The rice chromosomes 11 and 12 sequencing consortia"/>
        </authorList>
    </citation>
    <scope>NUCLEOTIDE SEQUENCE [LARGE SCALE GENOMIC DNA]</scope>
    <source>
        <strain>cv. Nipponbare</strain>
    </source>
</reference>
<reference key="2">
    <citation type="journal article" date="2005" name="Nature">
        <title>The map-based sequence of the rice genome.</title>
        <authorList>
            <consortium name="International rice genome sequencing project (IRGSP)"/>
        </authorList>
    </citation>
    <scope>NUCLEOTIDE SEQUENCE [LARGE SCALE GENOMIC DNA]</scope>
    <source>
        <strain>cv. Nipponbare</strain>
    </source>
</reference>
<reference key="3">
    <citation type="journal article" date="2008" name="Nucleic Acids Res.">
        <title>The rice annotation project database (RAP-DB): 2008 update.</title>
        <authorList>
            <consortium name="The rice annotation project (RAP)"/>
        </authorList>
    </citation>
    <scope>GENOME REANNOTATION</scope>
    <source>
        <strain>cv. Nipponbare</strain>
    </source>
</reference>
<reference key="4">
    <citation type="journal article" date="2013" name="Rice">
        <title>Improvement of the Oryza sativa Nipponbare reference genome using next generation sequence and optical map data.</title>
        <authorList>
            <person name="Kawahara Y."/>
            <person name="de la Bastide M."/>
            <person name="Hamilton J.P."/>
            <person name="Kanamori H."/>
            <person name="McCombie W.R."/>
            <person name="Ouyang S."/>
            <person name="Schwartz D.C."/>
            <person name="Tanaka T."/>
            <person name="Wu J."/>
            <person name="Zhou S."/>
            <person name="Childs K.L."/>
            <person name="Davidson R.M."/>
            <person name="Lin H."/>
            <person name="Quesada-Ocampo L."/>
            <person name="Vaillancourt B."/>
            <person name="Sakai H."/>
            <person name="Lee S.S."/>
            <person name="Kim J."/>
            <person name="Numa H."/>
            <person name="Itoh T."/>
            <person name="Buell C.R."/>
            <person name="Matsumoto T."/>
        </authorList>
    </citation>
    <scope>GENOME REANNOTATION</scope>
    <source>
        <strain>cv. Nipponbare</strain>
    </source>
</reference>
<reference key="5">
    <citation type="journal article" date="2005" name="PLoS Biol.">
        <title>The genomes of Oryza sativa: a history of duplications.</title>
        <authorList>
            <person name="Yu J."/>
            <person name="Wang J."/>
            <person name="Lin W."/>
            <person name="Li S."/>
            <person name="Li H."/>
            <person name="Zhou J."/>
            <person name="Ni P."/>
            <person name="Dong W."/>
            <person name="Hu S."/>
            <person name="Zeng C."/>
            <person name="Zhang J."/>
            <person name="Zhang Y."/>
            <person name="Li R."/>
            <person name="Xu Z."/>
            <person name="Li S."/>
            <person name="Li X."/>
            <person name="Zheng H."/>
            <person name="Cong L."/>
            <person name="Lin L."/>
            <person name="Yin J."/>
            <person name="Geng J."/>
            <person name="Li G."/>
            <person name="Shi J."/>
            <person name="Liu J."/>
            <person name="Lv H."/>
            <person name="Li J."/>
            <person name="Wang J."/>
            <person name="Deng Y."/>
            <person name="Ran L."/>
            <person name="Shi X."/>
            <person name="Wang X."/>
            <person name="Wu Q."/>
            <person name="Li C."/>
            <person name="Ren X."/>
            <person name="Wang J."/>
            <person name="Wang X."/>
            <person name="Li D."/>
            <person name="Liu D."/>
            <person name="Zhang X."/>
            <person name="Ji Z."/>
            <person name="Zhao W."/>
            <person name="Sun Y."/>
            <person name="Zhang Z."/>
            <person name="Bao J."/>
            <person name="Han Y."/>
            <person name="Dong L."/>
            <person name="Ji J."/>
            <person name="Chen P."/>
            <person name="Wu S."/>
            <person name="Liu J."/>
            <person name="Xiao Y."/>
            <person name="Bu D."/>
            <person name="Tan J."/>
            <person name="Yang L."/>
            <person name="Ye C."/>
            <person name="Zhang J."/>
            <person name="Xu J."/>
            <person name="Zhou Y."/>
            <person name="Yu Y."/>
            <person name="Zhang B."/>
            <person name="Zhuang S."/>
            <person name="Wei H."/>
            <person name="Liu B."/>
            <person name="Lei M."/>
            <person name="Yu H."/>
            <person name="Li Y."/>
            <person name="Xu H."/>
            <person name="Wei S."/>
            <person name="He X."/>
            <person name="Fang L."/>
            <person name="Zhang Z."/>
            <person name="Zhang Y."/>
            <person name="Huang X."/>
            <person name="Su Z."/>
            <person name="Tong W."/>
            <person name="Li J."/>
            <person name="Tong Z."/>
            <person name="Li S."/>
            <person name="Ye J."/>
            <person name="Wang L."/>
            <person name="Fang L."/>
            <person name="Lei T."/>
            <person name="Chen C.-S."/>
            <person name="Chen H.-C."/>
            <person name="Xu Z."/>
            <person name="Li H."/>
            <person name="Huang H."/>
            <person name="Zhang F."/>
            <person name="Xu H."/>
            <person name="Li N."/>
            <person name="Zhao C."/>
            <person name="Li S."/>
            <person name="Dong L."/>
            <person name="Huang Y."/>
            <person name="Li L."/>
            <person name="Xi Y."/>
            <person name="Qi Q."/>
            <person name="Li W."/>
            <person name="Zhang B."/>
            <person name="Hu W."/>
            <person name="Zhang Y."/>
            <person name="Tian X."/>
            <person name="Jiao Y."/>
            <person name="Liang X."/>
            <person name="Jin J."/>
            <person name="Gao L."/>
            <person name="Zheng W."/>
            <person name="Hao B."/>
            <person name="Liu S.-M."/>
            <person name="Wang W."/>
            <person name="Yuan L."/>
            <person name="Cao M."/>
            <person name="McDermott J."/>
            <person name="Samudrala R."/>
            <person name="Wang J."/>
            <person name="Wong G.K.-S."/>
            <person name="Yang H."/>
        </authorList>
    </citation>
    <scope>NUCLEOTIDE SEQUENCE [LARGE SCALE GENOMIC DNA]</scope>
    <source>
        <strain>cv. Nipponbare</strain>
    </source>
</reference>
<reference key="6">
    <citation type="journal article" date="2003" name="Science">
        <title>Collection, mapping, and annotation of over 28,000 cDNA clones from japonica rice.</title>
        <authorList>
            <consortium name="The rice full-length cDNA consortium"/>
        </authorList>
    </citation>
    <scope>NUCLEOTIDE SEQUENCE [LARGE SCALE MRNA]</scope>
    <source>
        <strain>cv. Nipponbare</strain>
    </source>
</reference>
<reference key="7">
    <citation type="journal article" date="2008" name="Mol. Genet. Genomics">
        <title>Identification and characterization of a gibberellin-regulated protein, which is ASR5, in the basal region of rice leaf sheaths.</title>
        <authorList>
            <person name="Takasaki H."/>
            <person name="Mahmood T."/>
            <person name="Matsuoka M."/>
            <person name="Matsumoto H."/>
            <person name="Komatsu S."/>
        </authorList>
    </citation>
    <scope>FUNCTION</scope>
    <scope>SUBCELLULAR LOCATION</scope>
    <scope>TISSUE SPECIFICITY</scope>
    <scope>INDUCTION</scope>
</reference>
<reference key="8">
    <citation type="journal article" date="2013" name="Plant Cell Environ.">
        <title>Involvement of ASR genes in aluminium tolerance mechanisms in rice.</title>
        <authorList>
            <person name="Arenhart R.A."/>
            <person name="Lima J.C."/>
            <person name="Pedron M."/>
            <person name="Carvalho F.E."/>
            <person name="Silveira J.A."/>
            <person name="Rosa S.B."/>
            <person name="Caverzan A."/>
            <person name="Andrade C.M."/>
            <person name="Schuenemann M."/>
            <person name="Margis R."/>
            <person name="Margis-Pinheiro M."/>
        </authorList>
    </citation>
    <scope>FUNCTION</scope>
    <scope>SUBCELLULAR LOCATION</scope>
    <scope>INDUCTION BY ALUMINUM</scope>
</reference>
<reference key="9">
    <citation type="journal article" date="2014" name="Mol. Plant">
        <title>New insights into aluminum tolerance in rice: the ASR5 protein binds the STAR1 promoter and other aluminum-responsive genes.</title>
        <authorList>
            <person name="Arenhart R.A."/>
            <person name="Bai Y."/>
            <person name="de Oliveira L.F."/>
            <person name="Neto L.B."/>
            <person name="Schunemann M."/>
            <person name="Maraschin F.S."/>
            <person name="Mariath J."/>
            <person name="Silverio A."/>
            <person name="Sachetto-Martins G."/>
            <person name="Margis R."/>
            <person name="Wang Z.Y."/>
            <person name="Margis-Pinheiro M."/>
        </authorList>
    </citation>
    <scope>FUNCTION</scope>
</reference>
<reference key="10">
    <citation type="journal article" date="2014" name="Plant Cell Rep.">
        <title>Organ- and stress-specific expression of the ASR genes in rice.</title>
        <authorList>
            <person name="Perez-Diaz J."/>
            <person name="Wu T.M."/>
            <person name="Perez-Diaz R."/>
            <person name="Ruiz-Lara S."/>
            <person name="Hong C.Y."/>
            <person name="Casaretto J.A."/>
        </authorList>
    </citation>
    <scope>TISSUE SPECIFICITY</scope>
    <scope>INDUCTION</scope>
</reference>
<reference key="11">
    <citation type="journal article" date="2017" name="Plant Biotechnol. J.">
        <title>OsASR5 enhances drought tolerance through a stomatal closure pathway associated with ABA and H2O2 signalling in rice.</title>
        <authorList>
            <person name="Li J."/>
            <person name="Li Y."/>
            <person name="Yin Z."/>
            <person name="Jiang J."/>
            <person name="Zhang M."/>
            <person name="Guo X."/>
            <person name="Ye Z."/>
            <person name="Zhao Y."/>
            <person name="Xiong H."/>
            <person name="Zhang Z."/>
            <person name="Shao Y."/>
            <person name="Jiang C."/>
            <person name="Zhang H."/>
            <person name="An G."/>
            <person name="Paek N.C."/>
            <person name="Ali J."/>
            <person name="Li Z."/>
        </authorList>
    </citation>
    <scope>FUNCTION</scope>
    <scope>SUBCELLULAR LOCATION</scope>
    <scope>INDUCTION</scope>
    <scope>DISRUPTION PHENOTYPE</scope>
</reference>
<accession>Q53JF7</accession>
<name>ASR5_ORYSJ</name>
<protein>
    <recommendedName>
        <fullName evidence="7">Abscisic stress-ripening protein 5</fullName>
        <shortName evidence="8">OsASR5</shortName>
    </recommendedName>
</protein>
<dbReference type="EMBL" id="AC147812">
    <property type="protein sequence ID" value="AAX92999.1"/>
    <property type="molecule type" value="Genomic_DNA"/>
</dbReference>
<dbReference type="EMBL" id="AC120527">
    <property type="protein sequence ID" value="AAX96480.1"/>
    <property type="molecule type" value="Genomic_DNA"/>
</dbReference>
<dbReference type="EMBL" id="DP000010">
    <property type="protein sequence ID" value="ABA91705.1"/>
    <property type="molecule type" value="Genomic_DNA"/>
</dbReference>
<dbReference type="EMBL" id="AP008217">
    <property type="protein sequence ID" value="BAF27686.1"/>
    <property type="molecule type" value="Genomic_DNA"/>
</dbReference>
<dbReference type="EMBL" id="AP014967">
    <property type="protein sequence ID" value="BAT12838.1"/>
    <property type="molecule type" value="Genomic_DNA"/>
</dbReference>
<dbReference type="EMBL" id="CM000148">
    <property type="protein sequence ID" value="EAZ17562.1"/>
    <property type="molecule type" value="Genomic_DNA"/>
</dbReference>
<dbReference type="EMBL" id="AK064892">
    <property type="protein sequence ID" value="BAG89264.1"/>
    <property type="molecule type" value="mRNA"/>
</dbReference>
<dbReference type="EMBL" id="AK104677">
    <property type="protein sequence ID" value="BAG96880.1"/>
    <property type="molecule type" value="mRNA"/>
</dbReference>
<dbReference type="EMBL" id="AK119208">
    <property type="protein sequence ID" value="BAG99580.1"/>
    <property type="molecule type" value="mRNA"/>
</dbReference>
<dbReference type="EMBL" id="AK119547">
    <property type="protein sequence ID" value="BAG99683.1"/>
    <property type="molecule type" value="mRNA"/>
</dbReference>
<dbReference type="STRING" id="39947.Q53JF7"/>
<dbReference type="PaxDb" id="39947-Q53JF7"/>
<dbReference type="EnsemblPlants" id="Os11t0167800-01">
    <property type="protein sequence ID" value="Os11t0167800-01"/>
    <property type="gene ID" value="Os11g0167800"/>
</dbReference>
<dbReference type="Gramene" id="Os11t0167800-01">
    <property type="protein sequence ID" value="Os11t0167800-01"/>
    <property type="gene ID" value="Os11g0167800"/>
</dbReference>
<dbReference type="KEGG" id="dosa:Os11g0167800"/>
<dbReference type="KEGG" id="osa:4349876"/>
<dbReference type="eggNOG" id="ENOG502S1T2">
    <property type="taxonomic scope" value="Eukaryota"/>
</dbReference>
<dbReference type="HOGENOM" id="CLU_094741_0_0_1"/>
<dbReference type="InParanoid" id="Q53JF7"/>
<dbReference type="OMA" id="FHHKDKA"/>
<dbReference type="Proteomes" id="UP000000763">
    <property type="component" value="Chromosome 11"/>
</dbReference>
<dbReference type="Proteomes" id="UP000007752">
    <property type="component" value="Chromosome 11"/>
</dbReference>
<dbReference type="Proteomes" id="UP000059680">
    <property type="component" value="Chromosome 11"/>
</dbReference>
<dbReference type="GO" id="GO:0005737">
    <property type="term" value="C:cytoplasm"/>
    <property type="evidence" value="ECO:0000314"/>
    <property type="project" value="UniProtKB"/>
</dbReference>
<dbReference type="GO" id="GO:0005634">
    <property type="term" value="C:nucleus"/>
    <property type="evidence" value="ECO:0000314"/>
    <property type="project" value="UniProtKB"/>
</dbReference>
<dbReference type="GO" id="GO:0043565">
    <property type="term" value="F:sequence-specific DNA binding"/>
    <property type="evidence" value="ECO:0000314"/>
    <property type="project" value="UniProtKB"/>
</dbReference>
<dbReference type="GO" id="GO:0006355">
    <property type="term" value="P:regulation of DNA-templated transcription"/>
    <property type="evidence" value="ECO:0000314"/>
    <property type="project" value="UniProtKB"/>
</dbReference>
<dbReference type="GO" id="GO:0010044">
    <property type="term" value="P:response to aluminum ion"/>
    <property type="evidence" value="ECO:0000315"/>
    <property type="project" value="UniProtKB"/>
</dbReference>
<dbReference type="GO" id="GO:0006979">
    <property type="term" value="P:response to oxidative stress"/>
    <property type="evidence" value="ECO:0000315"/>
    <property type="project" value="UniProtKB"/>
</dbReference>
<dbReference type="GO" id="GO:0009414">
    <property type="term" value="P:response to water deprivation"/>
    <property type="evidence" value="ECO:0000315"/>
    <property type="project" value="UniProtKB"/>
</dbReference>
<dbReference type="InterPro" id="IPR003496">
    <property type="entry name" value="ABA_WDS"/>
</dbReference>
<dbReference type="PANTHER" id="PTHR33801">
    <property type="entry name" value="ABSCISIC STRESS-RIPENING PROTEIN 5"/>
    <property type="match status" value="1"/>
</dbReference>
<dbReference type="PANTHER" id="PTHR33801:SF24">
    <property type="entry name" value="ABSCISIC STRESS-RIPENING PROTEIN 5"/>
    <property type="match status" value="1"/>
</dbReference>
<dbReference type="Pfam" id="PF02496">
    <property type="entry name" value="ABA_WDS"/>
    <property type="match status" value="1"/>
</dbReference>
<feature type="chain" id="PRO_0000444478" description="Abscisic stress-ripening protein 5">
    <location>
        <begin position="1"/>
        <end position="138"/>
    </location>
</feature>
<feature type="region of interest" description="Disordered" evidence="1">
    <location>
        <begin position="1"/>
        <end position="27"/>
    </location>
</feature>
<feature type="region of interest" description="Disordered" evidence="1">
    <location>
        <begin position="106"/>
        <end position="138"/>
    </location>
</feature>
<feature type="compositionally biased region" description="Basic residues" evidence="1">
    <location>
        <begin position="1"/>
        <end position="13"/>
    </location>
</feature>
<keyword id="KW-0963">Cytoplasm</keyword>
<keyword id="KW-0539">Nucleus</keyword>
<keyword id="KW-1185">Reference proteome</keyword>
<keyword id="KW-0346">Stress response</keyword>